<name>PYRE_PROM4</name>
<protein>
    <recommendedName>
        <fullName evidence="1">Orotate phosphoribosyltransferase</fullName>
        <shortName evidence="1">OPRT</shortName>
        <shortName evidence="1">OPRTase</shortName>
        <ecNumber evidence="1">2.4.2.10</ecNumber>
    </recommendedName>
</protein>
<evidence type="ECO:0000255" key="1">
    <source>
        <dbReference type="HAMAP-Rule" id="MF_01208"/>
    </source>
</evidence>
<keyword id="KW-0328">Glycosyltransferase</keyword>
<keyword id="KW-0460">Magnesium</keyword>
<keyword id="KW-0665">Pyrimidine biosynthesis</keyword>
<keyword id="KW-1185">Reference proteome</keyword>
<keyword id="KW-0808">Transferase</keyword>
<comment type="function">
    <text evidence="1">Catalyzes the transfer of a ribosyl phosphate group from 5-phosphoribose 1-diphosphate to orotate, leading to the formation of orotidine monophosphate (OMP).</text>
</comment>
<comment type="catalytic activity">
    <reaction evidence="1">
        <text>orotidine 5'-phosphate + diphosphate = orotate + 5-phospho-alpha-D-ribose 1-diphosphate</text>
        <dbReference type="Rhea" id="RHEA:10380"/>
        <dbReference type="ChEBI" id="CHEBI:30839"/>
        <dbReference type="ChEBI" id="CHEBI:33019"/>
        <dbReference type="ChEBI" id="CHEBI:57538"/>
        <dbReference type="ChEBI" id="CHEBI:58017"/>
        <dbReference type="EC" id="2.4.2.10"/>
    </reaction>
</comment>
<comment type="cofactor">
    <cofactor evidence="1">
        <name>Mg(2+)</name>
        <dbReference type="ChEBI" id="CHEBI:18420"/>
    </cofactor>
</comment>
<comment type="pathway">
    <text evidence="1">Pyrimidine metabolism; UMP biosynthesis via de novo pathway; UMP from orotate: step 1/2.</text>
</comment>
<comment type="subunit">
    <text evidence="1">Homodimer.</text>
</comment>
<comment type="similarity">
    <text evidence="1">Belongs to the purine/pyrimidine phosphoribosyltransferase family. PyrE subfamily.</text>
</comment>
<gene>
    <name evidence="1" type="primary">pyrE</name>
    <name type="ordered locus">P9211_03021</name>
</gene>
<reference key="1">
    <citation type="journal article" date="2007" name="PLoS Genet.">
        <title>Patterns and implications of gene gain and loss in the evolution of Prochlorococcus.</title>
        <authorList>
            <person name="Kettler G.C."/>
            <person name="Martiny A.C."/>
            <person name="Huang K."/>
            <person name="Zucker J."/>
            <person name="Coleman M.L."/>
            <person name="Rodrigue S."/>
            <person name="Chen F."/>
            <person name="Lapidus A."/>
            <person name="Ferriera S."/>
            <person name="Johnson J."/>
            <person name="Steglich C."/>
            <person name="Church G.M."/>
            <person name="Richardson P."/>
            <person name="Chisholm S.W."/>
        </authorList>
    </citation>
    <scope>NUCLEOTIDE SEQUENCE [LARGE SCALE GENOMIC DNA]</scope>
    <source>
        <strain>MIT 9211</strain>
    </source>
</reference>
<accession>A9BDP7</accession>
<sequence length="194" mass="20619">MNPIAQSKDSSREKLLSLLASNAYRHGTFTLSSGKKSNHYVNCKPVTLSGFGLVLLSDLFLPHVEEDSIAVAGLTLGADPLVSGLAMAAAQQERTLNALIVRKEPKGHGTEAWIEGPLPPKGSVITVLEDVVTTGGSSLKAVSQISKAGYKVNRILAIVDRQEGAAMEIQKSGLLLISLFNLDELVQRAKDISS</sequence>
<feature type="chain" id="PRO_1000138814" description="Orotate phosphoribosyltransferase">
    <location>
        <begin position="1"/>
        <end position="194"/>
    </location>
</feature>
<feature type="binding site" evidence="1">
    <location>
        <position position="102"/>
    </location>
    <ligand>
        <name>5-phospho-alpha-D-ribose 1-diphosphate</name>
        <dbReference type="ChEBI" id="CHEBI:58017"/>
        <note>ligand shared between dimeric partners</note>
    </ligand>
</feature>
<feature type="binding site" description="in other chain" evidence="1">
    <location>
        <position position="103"/>
    </location>
    <ligand>
        <name>5-phospho-alpha-D-ribose 1-diphosphate</name>
        <dbReference type="ChEBI" id="CHEBI:58017"/>
        <note>ligand shared between dimeric partners</note>
    </ligand>
</feature>
<feature type="binding site" evidence="1">
    <location>
        <position position="106"/>
    </location>
    <ligand>
        <name>5-phospho-alpha-D-ribose 1-diphosphate</name>
        <dbReference type="ChEBI" id="CHEBI:58017"/>
        <note>ligand shared between dimeric partners</note>
    </ligand>
</feature>
<feature type="binding site" evidence="1">
    <location>
        <position position="108"/>
    </location>
    <ligand>
        <name>5-phospho-alpha-D-ribose 1-diphosphate</name>
        <dbReference type="ChEBI" id="CHEBI:58017"/>
        <note>ligand shared between dimeric partners</note>
    </ligand>
</feature>
<feature type="binding site" description="in other chain" evidence="1">
    <location>
        <begin position="129"/>
        <end position="137"/>
    </location>
    <ligand>
        <name>5-phospho-alpha-D-ribose 1-diphosphate</name>
        <dbReference type="ChEBI" id="CHEBI:58017"/>
        <note>ligand shared between dimeric partners</note>
    </ligand>
</feature>
<feature type="binding site" evidence="1">
    <location>
        <position position="133"/>
    </location>
    <ligand>
        <name>orotate</name>
        <dbReference type="ChEBI" id="CHEBI:30839"/>
    </ligand>
</feature>
<feature type="binding site" evidence="1">
    <location>
        <position position="161"/>
    </location>
    <ligand>
        <name>orotate</name>
        <dbReference type="ChEBI" id="CHEBI:30839"/>
    </ligand>
</feature>
<proteinExistence type="inferred from homology"/>
<organism>
    <name type="scientific">Prochlorococcus marinus (strain MIT 9211)</name>
    <dbReference type="NCBI Taxonomy" id="93059"/>
    <lineage>
        <taxon>Bacteria</taxon>
        <taxon>Bacillati</taxon>
        <taxon>Cyanobacteriota</taxon>
        <taxon>Cyanophyceae</taxon>
        <taxon>Synechococcales</taxon>
        <taxon>Prochlorococcaceae</taxon>
        <taxon>Prochlorococcus</taxon>
    </lineage>
</organism>
<dbReference type="EC" id="2.4.2.10" evidence="1"/>
<dbReference type="EMBL" id="CP000878">
    <property type="protein sequence ID" value="ABX08233.1"/>
    <property type="molecule type" value="Genomic_DNA"/>
</dbReference>
<dbReference type="RefSeq" id="WP_012194858.1">
    <property type="nucleotide sequence ID" value="NC_009976.1"/>
</dbReference>
<dbReference type="SMR" id="A9BDP7"/>
<dbReference type="STRING" id="93059.P9211_03021"/>
<dbReference type="KEGG" id="pmj:P9211_03021"/>
<dbReference type="eggNOG" id="COG0461">
    <property type="taxonomic scope" value="Bacteria"/>
</dbReference>
<dbReference type="HOGENOM" id="CLU_074878_2_1_3"/>
<dbReference type="OrthoDB" id="9785917at2"/>
<dbReference type="UniPathway" id="UPA00070">
    <property type="reaction ID" value="UER00119"/>
</dbReference>
<dbReference type="Proteomes" id="UP000000788">
    <property type="component" value="Chromosome"/>
</dbReference>
<dbReference type="GO" id="GO:0000287">
    <property type="term" value="F:magnesium ion binding"/>
    <property type="evidence" value="ECO:0007669"/>
    <property type="project" value="UniProtKB-UniRule"/>
</dbReference>
<dbReference type="GO" id="GO:0004588">
    <property type="term" value="F:orotate phosphoribosyltransferase activity"/>
    <property type="evidence" value="ECO:0007669"/>
    <property type="project" value="UniProtKB-UniRule"/>
</dbReference>
<dbReference type="GO" id="GO:0044205">
    <property type="term" value="P:'de novo' UMP biosynthetic process"/>
    <property type="evidence" value="ECO:0007669"/>
    <property type="project" value="UniProtKB-UniRule"/>
</dbReference>
<dbReference type="GO" id="GO:0019856">
    <property type="term" value="P:pyrimidine nucleobase biosynthetic process"/>
    <property type="evidence" value="ECO:0007669"/>
    <property type="project" value="TreeGrafter"/>
</dbReference>
<dbReference type="CDD" id="cd06223">
    <property type="entry name" value="PRTases_typeI"/>
    <property type="match status" value="1"/>
</dbReference>
<dbReference type="Gene3D" id="3.40.50.2020">
    <property type="match status" value="1"/>
</dbReference>
<dbReference type="HAMAP" id="MF_01208">
    <property type="entry name" value="PyrE"/>
    <property type="match status" value="1"/>
</dbReference>
<dbReference type="InterPro" id="IPR023031">
    <property type="entry name" value="OPRT"/>
</dbReference>
<dbReference type="InterPro" id="IPR004467">
    <property type="entry name" value="Or_phspho_trans_dom"/>
</dbReference>
<dbReference type="InterPro" id="IPR000836">
    <property type="entry name" value="PRibTrfase_dom"/>
</dbReference>
<dbReference type="InterPro" id="IPR029057">
    <property type="entry name" value="PRTase-like"/>
</dbReference>
<dbReference type="NCBIfam" id="TIGR00336">
    <property type="entry name" value="pyrE"/>
    <property type="match status" value="1"/>
</dbReference>
<dbReference type="PANTHER" id="PTHR19278">
    <property type="entry name" value="OROTATE PHOSPHORIBOSYLTRANSFERASE"/>
    <property type="match status" value="1"/>
</dbReference>
<dbReference type="PANTHER" id="PTHR19278:SF9">
    <property type="entry name" value="URIDINE 5'-MONOPHOSPHATE SYNTHASE"/>
    <property type="match status" value="1"/>
</dbReference>
<dbReference type="SUPFAM" id="SSF53271">
    <property type="entry name" value="PRTase-like"/>
    <property type="match status" value="1"/>
</dbReference>